<dbReference type="EC" id="1.7.99.1" evidence="1"/>
<dbReference type="EMBL" id="CP000230">
    <property type="protein sequence ID" value="ABC23556.1"/>
    <property type="molecule type" value="Genomic_DNA"/>
</dbReference>
<dbReference type="RefSeq" id="WP_011390569.1">
    <property type="nucleotide sequence ID" value="NC_007643.1"/>
</dbReference>
<dbReference type="RefSeq" id="YP_427843.1">
    <property type="nucleotide sequence ID" value="NC_007643.1"/>
</dbReference>
<dbReference type="SMR" id="Q2RQN9"/>
<dbReference type="STRING" id="269796.Rru_A2759"/>
<dbReference type="EnsemblBacteria" id="ABC23556">
    <property type="protein sequence ID" value="ABC23556"/>
    <property type="gene ID" value="Rru_A2759"/>
</dbReference>
<dbReference type="KEGG" id="rru:Rru_A2759"/>
<dbReference type="PATRIC" id="fig|269796.9.peg.2865"/>
<dbReference type="eggNOG" id="COG1151">
    <property type="taxonomic scope" value="Bacteria"/>
</dbReference>
<dbReference type="HOGENOM" id="CLU_038344_2_0_5"/>
<dbReference type="PhylomeDB" id="Q2RQN9"/>
<dbReference type="Proteomes" id="UP000001929">
    <property type="component" value="Chromosome"/>
</dbReference>
<dbReference type="GO" id="GO:0005737">
    <property type="term" value="C:cytoplasm"/>
    <property type="evidence" value="ECO:0007669"/>
    <property type="project" value="UniProtKB-SubCell"/>
</dbReference>
<dbReference type="GO" id="GO:0051539">
    <property type="term" value="F:4 iron, 4 sulfur cluster binding"/>
    <property type="evidence" value="ECO:0007669"/>
    <property type="project" value="UniProtKB-KW"/>
</dbReference>
<dbReference type="GO" id="GO:0050418">
    <property type="term" value="F:hydroxylamine reductase activity"/>
    <property type="evidence" value="ECO:0007669"/>
    <property type="project" value="UniProtKB-UniRule"/>
</dbReference>
<dbReference type="GO" id="GO:0046872">
    <property type="term" value="F:metal ion binding"/>
    <property type="evidence" value="ECO:0007669"/>
    <property type="project" value="UniProtKB-KW"/>
</dbReference>
<dbReference type="GO" id="GO:0004601">
    <property type="term" value="F:peroxidase activity"/>
    <property type="evidence" value="ECO:0007669"/>
    <property type="project" value="TreeGrafter"/>
</dbReference>
<dbReference type="GO" id="GO:0042542">
    <property type="term" value="P:response to hydrogen peroxide"/>
    <property type="evidence" value="ECO:0007669"/>
    <property type="project" value="TreeGrafter"/>
</dbReference>
<dbReference type="CDD" id="cd01914">
    <property type="entry name" value="HCP"/>
    <property type="match status" value="1"/>
</dbReference>
<dbReference type="FunFam" id="1.20.1270.20:FF:000001">
    <property type="entry name" value="Hydroxylamine reductase"/>
    <property type="match status" value="1"/>
</dbReference>
<dbReference type="FunFam" id="3.40.50.2030:FF:000001">
    <property type="entry name" value="Hydroxylamine reductase"/>
    <property type="match status" value="1"/>
</dbReference>
<dbReference type="Gene3D" id="1.20.1270.20">
    <property type="match status" value="2"/>
</dbReference>
<dbReference type="Gene3D" id="3.40.50.2030">
    <property type="match status" value="2"/>
</dbReference>
<dbReference type="HAMAP" id="MF_00069">
    <property type="entry name" value="Hydroxylam_reduct"/>
    <property type="match status" value="1"/>
</dbReference>
<dbReference type="InterPro" id="IPR004137">
    <property type="entry name" value="HCP/CODH"/>
</dbReference>
<dbReference type="InterPro" id="IPR010048">
    <property type="entry name" value="Hydroxylam_reduct"/>
</dbReference>
<dbReference type="InterPro" id="IPR016099">
    <property type="entry name" value="Prismane-like_a/b-sand"/>
</dbReference>
<dbReference type="InterPro" id="IPR011254">
    <property type="entry name" value="Prismane-like_sf"/>
</dbReference>
<dbReference type="InterPro" id="IPR016100">
    <property type="entry name" value="Prismane_a-bundle"/>
</dbReference>
<dbReference type="NCBIfam" id="TIGR01703">
    <property type="entry name" value="hybrid_clust"/>
    <property type="match status" value="1"/>
</dbReference>
<dbReference type="NCBIfam" id="NF003658">
    <property type="entry name" value="PRK05290.1"/>
    <property type="match status" value="1"/>
</dbReference>
<dbReference type="PANTHER" id="PTHR30109">
    <property type="entry name" value="HYDROXYLAMINE REDUCTASE"/>
    <property type="match status" value="1"/>
</dbReference>
<dbReference type="PANTHER" id="PTHR30109:SF0">
    <property type="entry name" value="HYDROXYLAMINE REDUCTASE"/>
    <property type="match status" value="1"/>
</dbReference>
<dbReference type="Pfam" id="PF03063">
    <property type="entry name" value="Prismane"/>
    <property type="match status" value="1"/>
</dbReference>
<dbReference type="PIRSF" id="PIRSF000076">
    <property type="entry name" value="HCP"/>
    <property type="match status" value="1"/>
</dbReference>
<dbReference type="SUPFAM" id="SSF56821">
    <property type="entry name" value="Prismane protein-like"/>
    <property type="match status" value="1"/>
</dbReference>
<comment type="function">
    <text evidence="1">Catalyzes the reduction of hydroxylamine to form NH(3) and H(2)O.</text>
</comment>
<comment type="catalytic activity">
    <reaction evidence="1">
        <text>A + NH4(+) + H2O = hydroxylamine + AH2 + H(+)</text>
        <dbReference type="Rhea" id="RHEA:22052"/>
        <dbReference type="ChEBI" id="CHEBI:13193"/>
        <dbReference type="ChEBI" id="CHEBI:15377"/>
        <dbReference type="ChEBI" id="CHEBI:15378"/>
        <dbReference type="ChEBI" id="CHEBI:15429"/>
        <dbReference type="ChEBI" id="CHEBI:17499"/>
        <dbReference type="ChEBI" id="CHEBI:28938"/>
        <dbReference type="EC" id="1.7.99.1"/>
    </reaction>
</comment>
<comment type="cofactor">
    <cofactor evidence="1">
        <name>[4Fe-4S] cluster</name>
        <dbReference type="ChEBI" id="CHEBI:49883"/>
    </cofactor>
    <text evidence="1">Binds 1 [4Fe-4S] cluster.</text>
</comment>
<comment type="cofactor">
    <cofactor evidence="1">
        <name>hybrid [4Fe-2O-2S] cluster</name>
        <dbReference type="ChEBI" id="CHEBI:60519"/>
    </cofactor>
    <text evidence="1">Binds 1 hybrid [4Fe-2O-2S] cluster.</text>
</comment>
<comment type="subcellular location">
    <subcellularLocation>
        <location evidence="1">Cytoplasm</location>
    </subcellularLocation>
</comment>
<comment type="similarity">
    <text evidence="1">Belongs to the HCP family.</text>
</comment>
<organism>
    <name type="scientific">Rhodospirillum rubrum (strain ATCC 11170 / ATH 1.1.1 / DSM 467 / LMG 4362 / NCIMB 8255 / S1)</name>
    <dbReference type="NCBI Taxonomy" id="269796"/>
    <lineage>
        <taxon>Bacteria</taxon>
        <taxon>Pseudomonadati</taxon>
        <taxon>Pseudomonadota</taxon>
        <taxon>Alphaproteobacteria</taxon>
        <taxon>Rhodospirillales</taxon>
        <taxon>Rhodospirillaceae</taxon>
        <taxon>Rhodospirillum</taxon>
    </lineage>
</organism>
<name>HCP_RHORT</name>
<gene>
    <name evidence="1" type="primary">hcp</name>
    <name type="ordered locus">Rru_A2759</name>
</gene>
<protein>
    <recommendedName>
        <fullName evidence="1">Hydroxylamine reductase</fullName>
        <ecNumber evidence="1">1.7.99.1</ecNumber>
    </recommendedName>
    <alternativeName>
        <fullName evidence="1">Hybrid-cluster protein</fullName>
        <shortName evidence="1">HCP</shortName>
    </alternativeName>
    <alternativeName>
        <fullName evidence="1">Prismane protein</fullName>
    </alternativeName>
</protein>
<evidence type="ECO:0000255" key="1">
    <source>
        <dbReference type="HAMAP-Rule" id="MF_00069"/>
    </source>
</evidence>
<sequence length="549" mass="57949">MYCYQCEQTAQGVACVTVGLCGKTAEVAALQDLLIEAAKGLSQYAYRLRQLGIALPEIDAFVLDALFTTVTNVSFDPARLEEQLREAACLRDQLRARYDAACAARHTSPETLSGPALWQPASTRAGLVGTGEAASIAHRLTAQGADLTGLQDLLLYGVKGMAAYACHARILGQTDESVAAFVHEVLTTLAEVPADAEALLGLVLRCGTVSLTVLDLLDRANTGAYGDPQPTPVLMGHRAGKAILVSGHDLKDLAVLLEQTVGLGVDIYTHGEMLPAHGYPELKKYPHLVGHYGGAWQRQRSEFAAFPGPILMTTNCIQNPTAAYRDRLFTCGLVAHPEATALSGRNFAPLIASALAAPGFAEDGPVRHHLAGFGHKAVLGVAPQIIDAVKAGAIRRFVLIGGCDGHESARSYFDDLAGSLPQDAVVLTLGCGKFRVIDHDMGTIAGLPRLLDMGQCNDAYSAIKVAQALAEAFGVGVNDLPLSLVLSWFEQKAVTVLLALLALGVRNIRLGPNLPAFITPPVLKVLVDRFGIMPVGTVAEDLAAMGLAA</sequence>
<reference key="1">
    <citation type="journal article" date="2011" name="Stand. Genomic Sci.">
        <title>Complete genome sequence of Rhodospirillum rubrum type strain (S1).</title>
        <authorList>
            <person name="Munk A.C."/>
            <person name="Copeland A."/>
            <person name="Lucas S."/>
            <person name="Lapidus A."/>
            <person name="Del Rio T.G."/>
            <person name="Barry K."/>
            <person name="Detter J.C."/>
            <person name="Hammon N."/>
            <person name="Israni S."/>
            <person name="Pitluck S."/>
            <person name="Brettin T."/>
            <person name="Bruce D."/>
            <person name="Han C."/>
            <person name="Tapia R."/>
            <person name="Gilna P."/>
            <person name="Schmutz J."/>
            <person name="Larimer F."/>
            <person name="Land M."/>
            <person name="Kyrpides N.C."/>
            <person name="Mavromatis K."/>
            <person name="Richardson P."/>
            <person name="Rohde M."/>
            <person name="Goeker M."/>
            <person name="Klenk H.P."/>
            <person name="Zhang Y."/>
            <person name="Roberts G.P."/>
            <person name="Reslewic S."/>
            <person name="Schwartz D.C."/>
        </authorList>
    </citation>
    <scope>NUCLEOTIDE SEQUENCE [LARGE SCALE GENOMIC DNA]</scope>
    <source>
        <strain>ATCC 11170 / ATH 1.1.1 / DSM 467 / LMG 4362 / NCIMB 8255 / S1</strain>
    </source>
</reference>
<keyword id="KW-0004">4Fe-4S</keyword>
<keyword id="KW-0963">Cytoplasm</keyword>
<keyword id="KW-0408">Iron</keyword>
<keyword id="KW-0411">Iron-sulfur</keyword>
<keyword id="KW-0479">Metal-binding</keyword>
<keyword id="KW-0560">Oxidoreductase</keyword>
<keyword id="KW-1185">Reference proteome</keyword>
<feature type="chain" id="PRO_1000009159" description="Hydroxylamine reductase">
    <location>
        <begin position="1"/>
        <end position="549"/>
    </location>
</feature>
<feature type="binding site" evidence="1">
    <location>
        <position position="3"/>
    </location>
    <ligand>
        <name>[4Fe-4S] cluster</name>
        <dbReference type="ChEBI" id="CHEBI:49883"/>
    </ligand>
</feature>
<feature type="binding site" evidence="1">
    <location>
        <position position="6"/>
    </location>
    <ligand>
        <name>[4Fe-4S] cluster</name>
        <dbReference type="ChEBI" id="CHEBI:49883"/>
    </ligand>
</feature>
<feature type="binding site" evidence="1">
    <location>
        <position position="15"/>
    </location>
    <ligand>
        <name>[4Fe-4S] cluster</name>
        <dbReference type="ChEBI" id="CHEBI:49883"/>
    </ligand>
</feature>
<feature type="binding site" evidence="1">
    <location>
        <position position="21"/>
    </location>
    <ligand>
        <name>[4Fe-4S] cluster</name>
        <dbReference type="ChEBI" id="CHEBI:49883"/>
    </ligand>
</feature>
<feature type="binding site" evidence="1">
    <location>
        <position position="248"/>
    </location>
    <ligand>
        <name>hybrid [4Fe-2O-2S] cluster</name>
        <dbReference type="ChEBI" id="CHEBI:60519"/>
    </ligand>
</feature>
<feature type="binding site" evidence="1">
    <location>
        <position position="272"/>
    </location>
    <ligand>
        <name>hybrid [4Fe-2O-2S] cluster</name>
        <dbReference type="ChEBI" id="CHEBI:60519"/>
    </ligand>
</feature>
<feature type="binding site" evidence="1">
    <location>
        <position position="316"/>
    </location>
    <ligand>
        <name>hybrid [4Fe-2O-2S] cluster</name>
        <dbReference type="ChEBI" id="CHEBI:60519"/>
    </ligand>
</feature>
<feature type="binding site" description="via persulfide group" evidence="1">
    <location>
        <position position="403"/>
    </location>
    <ligand>
        <name>hybrid [4Fe-2O-2S] cluster</name>
        <dbReference type="ChEBI" id="CHEBI:60519"/>
    </ligand>
</feature>
<feature type="binding site" evidence="1">
    <location>
        <position position="431"/>
    </location>
    <ligand>
        <name>hybrid [4Fe-2O-2S] cluster</name>
        <dbReference type="ChEBI" id="CHEBI:60519"/>
    </ligand>
</feature>
<feature type="binding site" evidence="1">
    <location>
        <position position="456"/>
    </location>
    <ligand>
        <name>hybrid [4Fe-2O-2S] cluster</name>
        <dbReference type="ChEBI" id="CHEBI:60519"/>
    </ligand>
</feature>
<feature type="binding site" evidence="1">
    <location>
        <position position="490"/>
    </location>
    <ligand>
        <name>hybrid [4Fe-2O-2S] cluster</name>
        <dbReference type="ChEBI" id="CHEBI:60519"/>
    </ligand>
</feature>
<feature type="binding site" evidence="1">
    <location>
        <position position="492"/>
    </location>
    <ligand>
        <name>hybrid [4Fe-2O-2S] cluster</name>
        <dbReference type="ChEBI" id="CHEBI:60519"/>
    </ligand>
</feature>
<feature type="modified residue" description="Cysteine persulfide" evidence="1">
    <location>
        <position position="403"/>
    </location>
</feature>
<accession>Q2RQN9</accession>
<proteinExistence type="inferred from homology"/>